<sequence>MDHRLLEIIACPVCNGKLWYNQEKQELICKLDNLAFPLRDGIPVLLETEARVLTADESKS</sequence>
<organism>
    <name type="scientific">Escherichia coli O127:H6 (strain E2348/69 / EPEC)</name>
    <dbReference type="NCBI Taxonomy" id="574521"/>
    <lineage>
        <taxon>Bacteria</taxon>
        <taxon>Pseudomonadati</taxon>
        <taxon>Pseudomonadota</taxon>
        <taxon>Gammaproteobacteria</taxon>
        <taxon>Enterobacterales</taxon>
        <taxon>Enterobacteriaceae</taxon>
        <taxon>Escherichia</taxon>
    </lineage>
</organism>
<comment type="similarity">
    <text evidence="1">Belongs to the UPF0434 family.</text>
</comment>
<keyword id="KW-1185">Reference proteome</keyword>
<reference key="1">
    <citation type="journal article" date="2009" name="J. Bacteriol.">
        <title>Complete genome sequence and comparative genome analysis of enteropathogenic Escherichia coli O127:H6 strain E2348/69.</title>
        <authorList>
            <person name="Iguchi A."/>
            <person name="Thomson N.R."/>
            <person name="Ogura Y."/>
            <person name="Saunders D."/>
            <person name="Ooka T."/>
            <person name="Henderson I.R."/>
            <person name="Harris D."/>
            <person name="Asadulghani M."/>
            <person name="Kurokawa K."/>
            <person name="Dean P."/>
            <person name="Kenny B."/>
            <person name="Quail M.A."/>
            <person name="Thurston S."/>
            <person name="Dougan G."/>
            <person name="Hayashi T."/>
            <person name="Parkhill J."/>
            <person name="Frankel G."/>
        </authorList>
    </citation>
    <scope>NUCLEOTIDE SEQUENCE [LARGE SCALE GENOMIC DNA]</scope>
    <source>
        <strain>E2348/69 / EPEC</strain>
    </source>
</reference>
<feature type="chain" id="PRO_1000164482" description="UPF0434 protein YcaR">
    <location>
        <begin position="1"/>
        <end position="60"/>
    </location>
</feature>
<evidence type="ECO:0000255" key="1">
    <source>
        <dbReference type="HAMAP-Rule" id="MF_01187"/>
    </source>
</evidence>
<protein>
    <recommendedName>
        <fullName evidence="1">UPF0434 protein YcaR</fullName>
    </recommendedName>
</protein>
<proteinExistence type="inferred from homology"/>
<gene>
    <name evidence="1" type="primary">ycaR</name>
    <name type="ordered locus">E2348C_0910</name>
</gene>
<dbReference type="EMBL" id="FM180568">
    <property type="protein sequence ID" value="CAS08458.1"/>
    <property type="molecule type" value="Genomic_DNA"/>
</dbReference>
<dbReference type="RefSeq" id="WP_000350058.1">
    <property type="nucleotide sequence ID" value="NC_011601.1"/>
</dbReference>
<dbReference type="SMR" id="B7UN03"/>
<dbReference type="GeneID" id="93776498"/>
<dbReference type="KEGG" id="ecg:E2348C_0910"/>
<dbReference type="HOGENOM" id="CLU_155659_3_1_6"/>
<dbReference type="Proteomes" id="UP000008205">
    <property type="component" value="Chromosome"/>
</dbReference>
<dbReference type="GO" id="GO:0005829">
    <property type="term" value="C:cytosol"/>
    <property type="evidence" value="ECO:0007669"/>
    <property type="project" value="TreeGrafter"/>
</dbReference>
<dbReference type="FunFam" id="2.20.25.10:FF:000002">
    <property type="entry name" value="UPF0434 protein YcaR"/>
    <property type="match status" value="1"/>
</dbReference>
<dbReference type="Gene3D" id="2.20.25.10">
    <property type="match status" value="1"/>
</dbReference>
<dbReference type="HAMAP" id="MF_01187">
    <property type="entry name" value="UPF0434"/>
    <property type="match status" value="1"/>
</dbReference>
<dbReference type="InterPro" id="IPR005651">
    <property type="entry name" value="Trm112-like"/>
</dbReference>
<dbReference type="NCBIfam" id="NF008806">
    <property type="entry name" value="PRK11827.1"/>
    <property type="match status" value="1"/>
</dbReference>
<dbReference type="PANTHER" id="PTHR33505:SF4">
    <property type="entry name" value="PROTEIN PREY, MITOCHONDRIAL"/>
    <property type="match status" value="1"/>
</dbReference>
<dbReference type="PANTHER" id="PTHR33505">
    <property type="entry name" value="ZGC:162634"/>
    <property type="match status" value="1"/>
</dbReference>
<dbReference type="Pfam" id="PF03966">
    <property type="entry name" value="Trm112p"/>
    <property type="match status" value="1"/>
</dbReference>
<dbReference type="SUPFAM" id="SSF158997">
    <property type="entry name" value="Trm112p-like"/>
    <property type="match status" value="1"/>
</dbReference>
<name>YCAR_ECO27</name>
<accession>B7UN03</accession>